<reference key="1">
    <citation type="submission" date="2001-09" db="EMBL/GenBank/DDBJ databases">
        <authorList>
            <person name="Hilton D.J."/>
            <person name="Nicola N.A."/>
        </authorList>
    </citation>
    <scope>NUCLEOTIDE SEQUENCE [MRNA]</scope>
    <source>
        <strain>C57BL/6J</strain>
    </source>
</reference>
<name>RB40B_MOUSE</name>
<protein>
    <recommendedName>
        <fullName>Ras-related protein Rab-40B</fullName>
        <ecNumber evidence="1">3.6.5.2</ecNumber>
    </recommendedName>
    <alternativeName>
        <fullName>SOCS box-containing protein RAR</fullName>
    </alternativeName>
</protein>
<proteinExistence type="evidence at transcript level"/>
<evidence type="ECO:0000250" key="1">
    <source>
        <dbReference type="UniProtKB" id="P62820"/>
    </source>
</evidence>
<evidence type="ECO:0000250" key="2">
    <source>
        <dbReference type="UniProtKB" id="Q12829"/>
    </source>
</evidence>
<evidence type="ECO:0000250" key="3">
    <source>
        <dbReference type="UniProtKB" id="Q96S21"/>
    </source>
</evidence>
<evidence type="ECO:0000255" key="4"/>
<evidence type="ECO:0000255" key="5">
    <source>
        <dbReference type="PROSITE-ProRule" id="PRU00194"/>
    </source>
</evidence>
<evidence type="ECO:0000255" key="6">
    <source>
        <dbReference type="PROSITE-ProRule" id="PRU00753"/>
    </source>
</evidence>
<evidence type="ECO:0000256" key="7">
    <source>
        <dbReference type="SAM" id="MobiDB-lite"/>
    </source>
</evidence>
<evidence type="ECO:0000305" key="8"/>
<evidence type="ECO:0000312" key="9">
    <source>
        <dbReference type="MGI" id="MGI:2183451"/>
    </source>
</evidence>
<accession>Q8VHP8</accession>
<dbReference type="EC" id="3.6.5.2" evidence="1"/>
<dbReference type="EMBL" id="AF425643">
    <property type="protein sequence ID" value="AAL60520.1"/>
    <property type="molecule type" value="mRNA"/>
</dbReference>
<dbReference type="CCDS" id="CCDS25774.2"/>
<dbReference type="RefSeq" id="NP_631886.3">
    <property type="nucleotide sequence ID" value="NM_139147.4"/>
</dbReference>
<dbReference type="SMR" id="Q8VHP8"/>
<dbReference type="FunCoup" id="Q8VHP8">
    <property type="interactions" value="952"/>
</dbReference>
<dbReference type="IntAct" id="Q8VHP8">
    <property type="interactions" value="27"/>
</dbReference>
<dbReference type="MINT" id="Q8VHP8"/>
<dbReference type="STRING" id="10090.ENSMUSP00000101713"/>
<dbReference type="iPTMnet" id="Q8VHP8"/>
<dbReference type="PhosphoSitePlus" id="Q8VHP8"/>
<dbReference type="PaxDb" id="10090-ENSMUSP00000101713"/>
<dbReference type="ProteomicsDB" id="300250"/>
<dbReference type="Ensembl" id="ENSMUST00000106107.3">
    <property type="protein sequence ID" value="ENSMUSP00000101713.4"/>
    <property type="gene ID" value="ENSMUSG00000025170.14"/>
</dbReference>
<dbReference type="GeneID" id="217371"/>
<dbReference type="KEGG" id="mmu:217371"/>
<dbReference type="AGR" id="MGI:2183451"/>
<dbReference type="CTD" id="10966"/>
<dbReference type="MGI" id="MGI:2183451">
    <property type="gene designation" value="Rab40b"/>
</dbReference>
<dbReference type="eggNOG" id="KOG0078">
    <property type="taxonomic scope" value="Eukaryota"/>
</dbReference>
<dbReference type="GeneTree" id="ENSGT00940000161207"/>
<dbReference type="InParanoid" id="Q8VHP8"/>
<dbReference type="OMA" id="HKRNSFR"/>
<dbReference type="OrthoDB" id="6339763at2759"/>
<dbReference type="Reactome" id="R-MMU-8873719">
    <property type="pathway name" value="RAB geranylgeranylation"/>
</dbReference>
<dbReference type="UniPathway" id="UPA00143"/>
<dbReference type="PRO" id="PR:Q8VHP8"/>
<dbReference type="Proteomes" id="UP000000589">
    <property type="component" value="Chromosome 11"/>
</dbReference>
<dbReference type="RNAct" id="Q8VHP8">
    <property type="molecule type" value="protein"/>
</dbReference>
<dbReference type="GO" id="GO:0005635">
    <property type="term" value="C:nuclear envelope"/>
    <property type="evidence" value="ECO:0007669"/>
    <property type="project" value="Ensembl"/>
</dbReference>
<dbReference type="GO" id="GO:0048471">
    <property type="term" value="C:perinuclear region of cytoplasm"/>
    <property type="evidence" value="ECO:0007669"/>
    <property type="project" value="Ensembl"/>
</dbReference>
<dbReference type="GO" id="GO:0005886">
    <property type="term" value="C:plasma membrane"/>
    <property type="evidence" value="ECO:0007669"/>
    <property type="project" value="UniProtKB-SubCell"/>
</dbReference>
<dbReference type="GO" id="GO:0005525">
    <property type="term" value="F:GTP binding"/>
    <property type="evidence" value="ECO:0007669"/>
    <property type="project" value="UniProtKB-KW"/>
</dbReference>
<dbReference type="GO" id="GO:0003924">
    <property type="term" value="F:GTPase activity"/>
    <property type="evidence" value="ECO:0007669"/>
    <property type="project" value="InterPro"/>
</dbReference>
<dbReference type="GO" id="GO:1990748">
    <property type="term" value="P:cellular detoxification"/>
    <property type="evidence" value="ECO:0007669"/>
    <property type="project" value="Ensembl"/>
</dbReference>
<dbReference type="GO" id="GO:0035556">
    <property type="term" value="P:intracellular signal transduction"/>
    <property type="evidence" value="ECO:0007669"/>
    <property type="project" value="InterPro"/>
</dbReference>
<dbReference type="GO" id="GO:0016567">
    <property type="term" value="P:protein ubiquitination"/>
    <property type="evidence" value="ECO:0007669"/>
    <property type="project" value="UniProtKB-UniPathway"/>
</dbReference>
<dbReference type="CDD" id="cd04121">
    <property type="entry name" value="Rab40"/>
    <property type="match status" value="1"/>
</dbReference>
<dbReference type="FunFam" id="3.40.50.300:FF:000371">
    <property type="entry name" value="RAB40C, member RAS oncogene family"/>
    <property type="match status" value="1"/>
</dbReference>
<dbReference type="Gene3D" id="3.40.50.300">
    <property type="entry name" value="P-loop containing nucleotide triphosphate hydrolases"/>
    <property type="match status" value="1"/>
</dbReference>
<dbReference type="Gene3D" id="1.10.750.20">
    <property type="entry name" value="SOCS box"/>
    <property type="match status" value="1"/>
</dbReference>
<dbReference type="InterPro" id="IPR027417">
    <property type="entry name" value="P-loop_NTPase"/>
</dbReference>
<dbReference type="InterPro" id="IPR005225">
    <property type="entry name" value="Small_GTP-bd"/>
</dbReference>
<dbReference type="InterPro" id="IPR001806">
    <property type="entry name" value="Small_GTPase"/>
</dbReference>
<dbReference type="InterPro" id="IPR050305">
    <property type="entry name" value="Small_GTPase_Rab"/>
</dbReference>
<dbReference type="InterPro" id="IPR001496">
    <property type="entry name" value="SOCS_box"/>
</dbReference>
<dbReference type="InterPro" id="IPR036036">
    <property type="entry name" value="SOCS_box-like_dom_sf"/>
</dbReference>
<dbReference type="NCBIfam" id="TIGR00231">
    <property type="entry name" value="small_GTP"/>
    <property type="match status" value="1"/>
</dbReference>
<dbReference type="PANTHER" id="PTHR47980">
    <property type="entry name" value="LD44762P"/>
    <property type="match status" value="1"/>
</dbReference>
<dbReference type="Pfam" id="PF00071">
    <property type="entry name" value="Ras"/>
    <property type="match status" value="1"/>
</dbReference>
<dbReference type="Pfam" id="PF07525">
    <property type="entry name" value="SOCS_box"/>
    <property type="match status" value="1"/>
</dbReference>
<dbReference type="PRINTS" id="PR00449">
    <property type="entry name" value="RASTRNSFRMNG"/>
</dbReference>
<dbReference type="SMART" id="SM00175">
    <property type="entry name" value="RAB"/>
    <property type="match status" value="1"/>
</dbReference>
<dbReference type="SMART" id="SM00176">
    <property type="entry name" value="RAN"/>
    <property type="match status" value="1"/>
</dbReference>
<dbReference type="SMART" id="SM00173">
    <property type="entry name" value="RAS"/>
    <property type="match status" value="1"/>
</dbReference>
<dbReference type="SMART" id="SM00174">
    <property type="entry name" value="RHO"/>
    <property type="match status" value="1"/>
</dbReference>
<dbReference type="SMART" id="SM00253">
    <property type="entry name" value="SOCS"/>
    <property type="match status" value="1"/>
</dbReference>
<dbReference type="SMART" id="SM00969">
    <property type="entry name" value="SOCS_box"/>
    <property type="match status" value="1"/>
</dbReference>
<dbReference type="SUPFAM" id="SSF52540">
    <property type="entry name" value="P-loop containing nucleoside triphosphate hydrolases"/>
    <property type="match status" value="1"/>
</dbReference>
<dbReference type="SUPFAM" id="SSF158235">
    <property type="entry name" value="SOCS box-like"/>
    <property type="match status" value="1"/>
</dbReference>
<dbReference type="PROSITE" id="PS51419">
    <property type="entry name" value="RAB"/>
    <property type="match status" value="1"/>
</dbReference>
<dbReference type="PROSITE" id="PS50225">
    <property type="entry name" value="SOCS"/>
    <property type="match status" value="1"/>
</dbReference>
<sequence>MSSLGSPVRAYDFLLKFLLVGDSDVGKGEILASLQDGAAESPYGHPAGIDHKTTTILLDGRRVKLQLWDTSGQGRFCTIFRSYSRGAQGVVLVYDIANRWSFDGINRWIKEIDEHAPGVPKILVGNRLHLAFKRQVPTEQAQAYAERLGVTFFEVSPLCNFNITESFTELARIVLLRHGMDRLWRPSKVLSLQELCCRAVVSCTPGHLVDKLPLPVALRSHLKSFSMASGLNTRMMHGRSYSLTANSSHKRNSFRKVRTIRPPQSPPRNCARNSCKIS</sequence>
<feature type="chain" id="PRO_0000121260" description="Ras-related protein Rab-40B">
    <location>
        <begin position="1"/>
        <end position="278"/>
    </location>
</feature>
<feature type="domain" description="SOCS box" evidence="5">
    <location>
        <begin position="175"/>
        <end position="228"/>
    </location>
</feature>
<feature type="region of interest" description="Switch-I" evidence="6">
    <location>
        <begin position="41"/>
        <end position="49"/>
    </location>
</feature>
<feature type="region of interest" description="Switch-II" evidence="6">
    <location>
        <begin position="72"/>
        <end position="88"/>
    </location>
</feature>
<feature type="region of interest" description="Disordered" evidence="7">
    <location>
        <begin position="245"/>
        <end position="278"/>
    </location>
</feature>
<feature type="compositionally biased region" description="Basic residues" evidence="7">
    <location>
        <begin position="248"/>
        <end position="259"/>
    </location>
</feature>
<feature type="binding site" evidence="1">
    <location>
        <position position="23"/>
    </location>
    <ligand>
        <name>GTP</name>
        <dbReference type="ChEBI" id="CHEBI:37565"/>
    </ligand>
</feature>
<feature type="binding site" evidence="1">
    <location>
        <position position="26"/>
    </location>
    <ligand>
        <name>GTP</name>
        <dbReference type="ChEBI" id="CHEBI:37565"/>
    </ligand>
</feature>
<feature type="binding site" evidence="1">
    <location>
        <position position="27"/>
    </location>
    <ligand>
        <name>GTP</name>
        <dbReference type="ChEBI" id="CHEBI:37565"/>
    </ligand>
</feature>
<feature type="binding site" evidence="1">
    <location>
        <position position="69"/>
    </location>
    <ligand>
        <name>Mg(2+)</name>
        <dbReference type="ChEBI" id="CHEBI:18420"/>
    </ligand>
</feature>
<feature type="binding site" evidence="1">
    <location>
        <position position="72"/>
    </location>
    <ligand>
        <name>GTP</name>
        <dbReference type="ChEBI" id="CHEBI:37565"/>
    </ligand>
</feature>
<feature type="binding site" evidence="1">
    <location>
        <position position="126"/>
    </location>
    <ligand>
        <name>GTP</name>
        <dbReference type="ChEBI" id="CHEBI:37565"/>
    </ligand>
</feature>
<feature type="binding site" evidence="1">
    <location>
        <position position="127"/>
    </location>
    <ligand>
        <name>GTP</name>
        <dbReference type="ChEBI" id="CHEBI:37565"/>
    </ligand>
</feature>
<feature type="lipid moiety-binding region" description="S-palmitoyl cysteine" evidence="4">
    <location>
        <position position="270"/>
    </location>
</feature>
<feature type="lipid moiety-binding region" description="S-geranylgeranyl cysteine" evidence="1">
    <location>
        <position position="275"/>
    </location>
</feature>
<keyword id="KW-1003">Cell membrane</keyword>
<keyword id="KW-0966">Cell projection</keyword>
<keyword id="KW-0963">Cytoplasm</keyword>
<keyword id="KW-0342">GTP-binding</keyword>
<keyword id="KW-0378">Hydrolase</keyword>
<keyword id="KW-0449">Lipoprotein</keyword>
<keyword id="KW-0460">Magnesium</keyword>
<keyword id="KW-0472">Membrane</keyword>
<keyword id="KW-0479">Metal-binding</keyword>
<keyword id="KW-0547">Nucleotide-binding</keyword>
<keyword id="KW-0564">Palmitate</keyword>
<keyword id="KW-0636">Prenylation</keyword>
<keyword id="KW-1185">Reference proteome</keyword>
<keyword id="KW-0833">Ubl conjugation pathway</keyword>
<comment type="function">
    <text evidence="2">RAB40B small GTPase acts as substrate-recognition components of the ECS(RAB40B) E3 ubiquitin ligase complex which mediates the ubiquitination of target proteins. The Rab40 subfamily belongs to the Rab family that are key regulators of intracellular membrane trafficking, from the formation of transport vesicles to their fusion with membranes. Rabs cycle between an inactive GDP-bound form and an active GTP-bound form that is able to recruit to membranes different sets of downstream effectors directly responsible for vesicle formation, movement, tethering and fusion. As part of the ECS(RAB40B) complex, GTP-bound RAB40B promotes LIMA1/EPLIN ubiquitination and degradation, thereby regulating leading-edge actin dynamics during cell migration. As part of the ECS(RAB40B) complex, GTP-bound RAB40B also ubiquitinates RAP2A GTPase which promotes its localization to lamellipodia and activation to drive cell migration. The ECS(RAB40B) complex does not mediate canonical ubiquitin-dependent degradation of RAP2. RAB40B also binds TKS5/SH3PXD2A effector independently from ECS complex to promote invadopodia-mediated extracellular matrix degradation.</text>
</comment>
<comment type="catalytic activity">
    <reaction evidence="1">
        <text>GTP + H2O = GDP + phosphate + H(+)</text>
        <dbReference type="Rhea" id="RHEA:19669"/>
        <dbReference type="ChEBI" id="CHEBI:15377"/>
        <dbReference type="ChEBI" id="CHEBI:15378"/>
        <dbReference type="ChEBI" id="CHEBI:37565"/>
        <dbReference type="ChEBI" id="CHEBI:43474"/>
        <dbReference type="ChEBI" id="CHEBI:58189"/>
        <dbReference type="EC" id="3.6.5.2"/>
    </reaction>
    <physiologicalReaction direction="left-to-right" evidence="1">
        <dbReference type="Rhea" id="RHEA:19670"/>
    </physiologicalReaction>
</comment>
<comment type="cofactor">
    <cofactor evidence="1">
        <name>Mg(2+)</name>
        <dbReference type="ChEBI" id="CHEBI:18420"/>
    </cofactor>
</comment>
<comment type="activity regulation">
    <text evidence="1">Regulated by guanine nucleotide exchange factors (GEFs) which promote the exchange of bound GDP for free GTP. Regulated by GTPase activating proteins (GAPs) which increase the GTP hydrolysis activity. Inhibited by GDP dissociation inhibitors (GDIs).</text>
</comment>
<comment type="pathway">
    <text>Protein modification; protein ubiquitination.</text>
</comment>
<comment type="subunit">
    <text evidence="2">Component of the cullin-5-RING E3 ubiquitin-protein ligase complex (ECS(RAB40B) complex) composed of CUL5, Elongin BC (ELOB and ELOC), RNF7/RBX2 and RAB40B; RAB40B interaction with ECS complex is GTP-independent. Binds (GTP-bound) LIMA1; interaction promotes LIMA1 subcellular localization in lamellipodia during cell migration. Interacts (GTP-bound) with TKS5/SH3PXD2A (via PX domain); interaction promotes invadopodia-mediated extracellular matrix degradation (By similarity).</text>
</comment>
<comment type="subcellular location">
    <subcellularLocation>
        <location evidence="2">Cell membrane</location>
        <topology evidence="2">Lipid-anchor</topology>
        <orientation evidence="2">Cytoplasmic side</orientation>
    </subcellularLocation>
    <subcellularLocation>
        <location evidence="2">Cytoplasm</location>
        <location evidence="2">Cytosol</location>
    </subcellularLocation>
    <subcellularLocation>
        <location evidence="2">Cell projection</location>
        <location evidence="2">Lamellipodium membrane</location>
    </subcellularLocation>
    <subcellularLocation>
        <location evidence="2">Cell projection</location>
        <location evidence="2">Ruffle</location>
    </subcellularLocation>
    <text evidence="2">Mainly localized in the cytosol. A subpopulation is present at the lamellipodia, where it colocalizes with actin ruffles. Colocalized with RAP2A at the lamellipodia plasma membrane.</text>
</comment>
<comment type="domain">
    <text evidence="3">The SOCS box contains two defined motifs including the BC box that recruits and binds Elongin BC complex, and the Cul box which interacts with the Cullin family of proteins to form a ECS (Elongin-Cullin-SOCS-box protein) E3 ubiquitin ligase complex.</text>
</comment>
<comment type="domain">
    <text evidence="1">Switch I, switch II and the interswitch regions are characteristic of Rab GTPases and mediate the interactions with Rab downstream effectors. The switch regions undergo conformational changes upon nucleotide binding which drive interaction with specific sets of effector proteins, with most effectors only binding to GTP-bound Rab.</text>
</comment>
<comment type="similarity">
    <text evidence="8">Belongs to the small GTPase superfamily. Rab family.</text>
</comment>
<organism>
    <name type="scientific">Mus musculus</name>
    <name type="common">Mouse</name>
    <dbReference type="NCBI Taxonomy" id="10090"/>
    <lineage>
        <taxon>Eukaryota</taxon>
        <taxon>Metazoa</taxon>
        <taxon>Chordata</taxon>
        <taxon>Craniata</taxon>
        <taxon>Vertebrata</taxon>
        <taxon>Euteleostomi</taxon>
        <taxon>Mammalia</taxon>
        <taxon>Eutheria</taxon>
        <taxon>Euarchontoglires</taxon>
        <taxon>Glires</taxon>
        <taxon>Rodentia</taxon>
        <taxon>Myomorpha</taxon>
        <taxon>Muroidea</taxon>
        <taxon>Muridae</taxon>
        <taxon>Murinae</taxon>
        <taxon>Mus</taxon>
        <taxon>Mus</taxon>
    </lineage>
</organism>
<gene>
    <name evidence="9" type="primary">Rab40b</name>
</gene>